<feature type="signal peptide" evidence="2">
    <location>
        <begin position="1"/>
        <end position="22"/>
    </location>
</feature>
<feature type="propeptide" id="PRO_0000392719" evidence="1">
    <location>
        <begin position="23"/>
        <end position="44"/>
    </location>
</feature>
<feature type="peptide" id="PRO_0000392720" description="Conotoxin Sr5.6">
    <location>
        <begin position="47"/>
        <end position="61"/>
    </location>
</feature>
<feature type="modified residue" description="Proline amide" evidence="1">
    <location>
        <position position="61"/>
    </location>
</feature>
<feature type="splice variant" id="VSP_038849" description="In isoform Sr5.8." evidence="3">
    <location>
        <begin position="22"/>
        <end position="36"/>
    </location>
</feature>
<evidence type="ECO:0000250" key="1"/>
<evidence type="ECO:0000255" key="2"/>
<evidence type="ECO:0000303" key="3">
    <source>
    </source>
</evidence>
<evidence type="ECO:0000305" key="4"/>
<evidence type="ECO:0000305" key="5">
    <source>
    </source>
</evidence>
<sequence length="62" mass="6853">MRCLPVFVILLLLIASASSVDAQLKTKDDVPLTSVHDNAKGTQHRRIMAGCCPRFYQCCYPG</sequence>
<organism>
    <name type="scientific">Conus spurius</name>
    <name type="common">Alphabet cone</name>
    <dbReference type="NCBI Taxonomy" id="192919"/>
    <lineage>
        <taxon>Eukaryota</taxon>
        <taxon>Metazoa</taxon>
        <taxon>Spiralia</taxon>
        <taxon>Lophotrochozoa</taxon>
        <taxon>Mollusca</taxon>
        <taxon>Gastropoda</taxon>
        <taxon>Caenogastropoda</taxon>
        <taxon>Neogastropoda</taxon>
        <taxon>Conoidea</taxon>
        <taxon>Conidae</taxon>
        <taxon>Conus</taxon>
        <taxon>Lindaconus</taxon>
    </lineage>
</organism>
<name>CT56_CONSP</name>
<comment type="subcellular location">
    <subcellularLocation>
        <location evidence="5">Secreted</location>
    </subcellularLocation>
</comment>
<comment type="alternative products">
    <event type="alternative splicing"/>
    <isoform>
        <id>C0KYC5-1</id>
        <name>Sr5.6</name>
        <sequence type="displayed"/>
    </isoform>
    <isoform>
        <id>C0KYC5-2</id>
        <name>Sr5.8</name>
        <sequence type="described" ref="VSP_038849"/>
    </isoform>
</comment>
<comment type="tissue specificity">
    <text evidence="5">Expressed by the venom duct.</text>
</comment>
<comment type="domain">
    <text evidence="4">The cysteine framework is V (CC-CC).</text>
</comment>
<comment type="PTM">
    <text evidence="4">Contains 2 disulfide bonds that can be either 'C1-C3, C2-C4' or 'C1-C4, C2-C3', since these disulfide connectivities have been observed for conotoxins with cysteine framework V (for examples, see AC P0DQQ7 and AC P81755).</text>
</comment>
<comment type="similarity">
    <text evidence="4">Belongs to the conotoxin T superfamily.</text>
</comment>
<proteinExistence type="inferred from homology"/>
<keyword id="KW-0025">Alternative splicing</keyword>
<keyword id="KW-0027">Amidation</keyword>
<keyword id="KW-0165">Cleavage on pair of basic residues</keyword>
<keyword id="KW-1015">Disulfide bond</keyword>
<keyword id="KW-0964">Secreted</keyword>
<keyword id="KW-0732">Signal</keyword>
<keyword id="KW-0800">Toxin</keyword>
<reference key="1">
    <citation type="journal article" date="2009" name="Peptides">
        <title>Identification, by RT-PCR, of four novel T-1-superfamily conotoxins from the vermivorous snail Conus spurius from the Gulf of Mexico.</title>
        <authorList>
            <person name="Zamora-Bustillos R."/>
            <person name="Aguilar M.B."/>
            <person name="Falcon A."/>
            <person name="Heimer de la Cotera E.P."/>
        </authorList>
    </citation>
    <scope>NUCLEOTIDE SEQUENCE [MRNA] (ISOFORMS SR5.6 AND SR5.8)</scope>
    <source>
        <tissue>Venom duct</tissue>
    </source>
</reference>
<dbReference type="EMBL" id="FJ646607">
    <property type="protein sequence ID" value="ACN22845.1"/>
    <property type="molecule type" value="mRNA"/>
</dbReference>
<dbReference type="EMBL" id="FJ646609">
    <property type="protein sequence ID" value="ACN22847.1"/>
    <property type="molecule type" value="mRNA"/>
</dbReference>
<dbReference type="ConoServer" id="3696">
    <property type="toxin name" value="Sr5.6 precursor"/>
</dbReference>
<dbReference type="ConoServer" id="3695">
    <property type="toxin name" value="Sr5.8 precursor"/>
</dbReference>
<dbReference type="GO" id="GO:0005576">
    <property type="term" value="C:extracellular region"/>
    <property type="evidence" value="ECO:0007669"/>
    <property type="project" value="UniProtKB-SubCell"/>
</dbReference>
<dbReference type="GO" id="GO:0090729">
    <property type="term" value="F:toxin activity"/>
    <property type="evidence" value="ECO:0007669"/>
    <property type="project" value="UniProtKB-KW"/>
</dbReference>
<dbReference type="InterPro" id="IPR031565">
    <property type="entry name" value="T-conotoxin"/>
</dbReference>
<dbReference type="Pfam" id="PF16981">
    <property type="entry name" value="Chi-conotoxin"/>
    <property type="match status" value="1"/>
</dbReference>
<protein>
    <recommendedName>
        <fullName evidence="3">Conotoxin Sr5.6</fullName>
    </recommendedName>
    <alternativeName>
        <fullName evidence="3">Sr5.8</fullName>
    </alternativeName>
</protein>
<accession>C0KYC5</accession>
<accession>C0KYC7</accession>